<feature type="chain" id="PRO_0000302344" description="Glycine cleavage system H protein">
    <location>
        <begin position="1"/>
        <end position="130"/>
    </location>
</feature>
<feature type="domain" description="Lipoyl-binding" evidence="2">
    <location>
        <begin position="25"/>
        <end position="107"/>
    </location>
</feature>
<feature type="modified residue" description="N6-lipoyllysine" evidence="1">
    <location>
        <position position="66"/>
    </location>
</feature>
<name>GCSH_TRIV2</name>
<evidence type="ECO:0000255" key="1">
    <source>
        <dbReference type="HAMAP-Rule" id="MF_00272"/>
    </source>
</evidence>
<evidence type="ECO:0000255" key="2">
    <source>
        <dbReference type="PROSITE-ProRule" id="PRU01066"/>
    </source>
</evidence>
<protein>
    <recommendedName>
        <fullName evidence="1">Glycine cleavage system H protein</fullName>
    </recommendedName>
</protein>
<accession>Q3M9G2</accession>
<reference key="1">
    <citation type="journal article" date="2014" name="Stand. Genomic Sci.">
        <title>Complete genome sequence of Anabaena variabilis ATCC 29413.</title>
        <authorList>
            <person name="Thiel T."/>
            <person name="Pratte B.S."/>
            <person name="Zhong J."/>
            <person name="Goodwin L."/>
            <person name="Copeland A."/>
            <person name="Lucas S."/>
            <person name="Han C."/>
            <person name="Pitluck S."/>
            <person name="Land M.L."/>
            <person name="Kyrpides N.C."/>
            <person name="Woyke T."/>
        </authorList>
    </citation>
    <scope>NUCLEOTIDE SEQUENCE [LARGE SCALE GENOMIC DNA]</scope>
    <source>
        <strain>ATCC 29413 / PCC 7937</strain>
    </source>
</reference>
<comment type="function">
    <text evidence="1">The glycine cleavage system catalyzes the degradation of glycine. The H protein shuttles the methylamine group of glycine from the P protein to the T protein.</text>
</comment>
<comment type="cofactor">
    <cofactor evidence="1">
        <name>(R)-lipoate</name>
        <dbReference type="ChEBI" id="CHEBI:83088"/>
    </cofactor>
    <text evidence="1">Binds 1 lipoyl cofactor covalently.</text>
</comment>
<comment type="subunit">
    <text evidence="1">The glycine cleavage system is composed of four proteins: P, T, L and H.</text>
</comment>
<comment type="similarity">
    <text evidence="1">Belongs to the GcvH family.</text>
</comment>
<sequence length="130" mass="14413">MSSFEYPQDLRYLDTHEYVRLDGEIATIGITEFAVDQLGDVVFLELPDIGDLLTKGDTFGTIESVKAVEDLNAPITGTVVERNEILIESPDAVADDPYGEGWFLKVRVNDPDEVNDALTADEYRAEVEGE</sequence>
<organism>
    <name type="scientific">Trichormus variabilis (strain ATCC 29413 / PCC 7937)</name>
    <name type="common">Anabaena variabilis</name>
    <dbReference type="NCBI Taxonomy" id="240292"/>
    <lineage>
        <taxon>Bacteria</taxon>
        <taxon>Bacillati</taxon>
        <taxon>Cyanobacteriota</taxon>
        <taxon>Cyanophyceae</taxon>
        <taxon>Nostocales</taxon>
        <taxon>Nostocaceae</taxon>
        <taxon>Trichormus</taxon>
    </lineage>
</organism>
<dbReference type="EMBL" id="CP000117">
    <property type="protein sequence ID" value="ABA22374.1"/>
    <property type="molecule type" value="Genomic_DNA"/>
</dbReference>
<dbReference type="SMR" id="Q3M9G2"/>
<dbReference type="STRING" id="240292.Ava_2761"/>
<dbReference type="KEGG" id="ava:Ava_2761"/>
<dbReference type="eggNOG" id="COG0509">
    <property type="taxonomic scope" value="Bacteria"/>
</dbReference>
<dbReference type="HOGENOM" id="CLU_097408_2_2_3"/>
<dbReference type="Proteomes" id="UP000002533">
    <property type="component" value="Chromosome"/>
</dbReference>
<dbReference type="GO" id="GO:0005829">
    <property type="term" value="C:cytosol"/>
    <property type="evidence" value="ECO:0007669"/>
    <property type="project" value="TreeGrafter"/>
</dbReference>
<dbReference type="GO" id="GO:0005960">
    <property type="term" value="C:glycine cleavage complex"/>
    <property type="evidence" value="ECO:0007669"/>
    <property type="project" value="InterPro"/>
</dbReference>
<dbReference type="GO" id="GO:0019464">
    <property type="term" value="P:glycine decarboxylation via glycine cleavage system"/>
    <property type="evidence" value="ECO:0007669"/>
    <property type="project" value="UniProtKB-UniRule"/>
</dbReference>
<dbReference type="CDD" id="cd06848">
    <property type="entry name" value="GCS_H"/>
    <property type="match status" value="1"/>
</dbReference>
<dbReference type="Gene3D" id="2.40.50.100">
    <property type="match status" value="1"/>
</dbReference>
<dbReference type="HAMAP" id="MF_00272">
    <property type="entry name" value="GcvH"/>
    <property type="match status" value="1"/>
</dbReference>
<dbReference type="InterPro" id="IPR003016">
    <property type="entry name" value="2-oxoA_DH_lipoyl-BS"/>
</dbReference>
<dbReference type="InterPro" id="IPR000089">
    <property type="entry name" value="Biotin_lipoyl"/>
</dbReference>
<dbReference type="InterPro" id="IPR002930">
    <property type="entry name" value="GCV_H"/>
</dbReference>
<dbReference type="InterPro" id="IPR033753">
    <property type="entry name" value="GCV_H/Fam206"/>
</dbReference>
<dbReference type="InterPro" id="IPR017453">
    <property type="entry name" value="GCV_H_sub"/>
</dbReference>
<dbReference type="InterPro" id="IPR011053">
    <property type="entry name" value="Single_hybrid_motif"/>
</dbReference>
<dbReference type="NCBIfam" id="TIGR00527">
    <property type="entry name" value="gcvH"/>
    <property type="match status" value="1"/>
</dbReference>
<dbReference type="NCBIfam" id="NF002270">
    <property type="entry name" value="PRK01202.1"/>
    <property type="match status" value="1"/>
</dbReference>
<dbReference type="PANTHER" id="PTHR11715">
    <property type="entry name" value="GLYCINE CLEAVAGE SYSTEM H PROTEIN"/>
    <property type="match status" value="1"/>
</dbReference>
<dbReference type="PANTHER" id="PTHR11715:SF3">
    <property type="entry name" value="GLYCINE CLEAVAGE SYSTEM H PROTEIN-RELATED"/>
    <property type="match status" value="1"/>
</dbReference>
<dbReference type="Pfam" id="PF01597">
    <property type="entry name" value="GCV_H"/>
    <property type="match status" value="1"/>
</dbReference>
<dbReference type="SUPFAM" id="SSF51230">
    <property type="entry name" value="Single hybrid motif"/>
    <property type="match status" value="1"/>
</dbReference>
<dbReference type="PROSITE" id="PS50968">
    <property type="entry name" value="BIOTINYL_LIPOYL"/>
    <property type="match status" value="1"/>
</dbReference>
<dbReference type="PROSITE" id="PS00189">
    <property type="entry name" value="LIPOYL"/>
    <property type="match status" value="1"/>
</dbReference>
<gene>
    <name evidence="1" type="primary">gcvH</name>
    <name type="ordered locus">Ava_2761</name>
</gene>
<keyword id="KW-0450">Lipoyl</keyword>
<proteinExistence type="inferred from homology"/>